<organism>
    <name type="scientific">Caenorhabditis briggsae</name>
    <dbReference type="NCBI Taxonomy" id="6238"/>
    <lineage>
        <taxon>Eukaryota</taxon>
        <taxon>Metazoa</taxon>
        <taxon>Ecdysozoa</taxon>
        <taxon>Nematoda</taxon>
        <taxon>Chromadorea</taxon>
        <taxon>Rhabditida</taxon>
        <taxon>Rhabditina</taxon>
        <taxon>Rhabditomorpha</taxon>
        <taxon>Rhabditoidea</taxon>
        <taxon>Rhabditidae</taxon>
        <taxon>Peloderinae</taxon>
        <taxon>Caenorhabditis</taxon>
    </lineage>
</organism>
<name>EIF3C_CAEBR</name>
<keyword id="KW-0963">Cytoplasm</keyword>
<keyword id="KW-0396">Initiation factor</keyword>
<keyword id="KW-0648">Protein biosynthesis</keyword>
<keyword id="KW-1185">Reference proteome</keyword>
<proteinExistence type="inferred from homology"/>
<gene>
    <name evidence="1" type="primary">eif-3.C</name>
    <name type="ORF">CBG03821</name>
</gene>
<evidence type="ECO:0000255" key="1">
    <source>
        <dbReference type="HAMAP-Rule" id="MF_03002"/>
    </source>
</evidence>
<evidence type="ECO:0000255" key="2">
    <source>
        <dbReference type="PROSITE-ProRule" id="PRU01185"/>
    </source>
</evidence>
<evidence type="ECO:0000256" key="3">
    <source>
        <dbReference type="SAM" id="MobiDB-lite"/>
    </source>
</evidence>
<comment type="function">
    <text evidence="1">Component of the eukaryotic translation initiation factor 3 (eIF-3) complex, which is involved in protein synthesis of a specialized repertoire of mRNAs and, together with other initiation factors, stimulates binding of mRNA and methionyl-tRNAi to the 40S ribosome. The eIF-3 complex specifically targets and initiates translation of a subset of mRNAs involved in cell proliferation.</text>
</comment>
<comment type="subunit">
    <text evidence="1">Component of the eukaryotic translation initiation factor 3 (eIF-3) complex.</text>
</comment>
<comment type="subcellular location">
    <subcellularLocation>
        <location evidence="1">Cytoplasm</location>
    </subcellularLocation>
</comment>
<comment type="similarity">
    <text evidence="1">Belongs to the eIF-3 subunit C family.</text>
</comment>
<sequence length="894" mass="103744">MSRFYRRGASDSDTDSSEDEVEELKANKSAKFRDDLDFMAGPEEDEKRVVRAQKDKKFDELKSLIKQNRDAKSNKDLNKLLTGFDTLAKAYDKSKTIFQRQNVTNPRFYIRFLVEIEDYVNKLWEDKEAKAALSKNNTKALSPLRQKLKKYIKDHGLTDLVSDYRANPDEDGYETPEDENDEDDFEEVPEASPGRQAERAADSESESDSDDDDSFNWSSEPDTNSSDDEENVTKMEQLRRYFLKKEFREESKDDKKDKRKRVIKVKEVVEEDDDDWTPVSREKSVVHFDPNEEVTHDVMIKKLNEVMSARGKRTTDRNQHVANLQKLLEVAEEKQLGLGISVKISFCIISALFELNAKISDYMEYETFMNTLRTVNTLLDLLITTDRVKLSVTYAEEDENLKDENEEYRIQGSILIAVQRLDGELAKILQNADCHSNDYIEKLKAEKDMCQLIEKAENYVELRNHLGIFDKHEVCKVYMMRIEHTYYKYQDQNVGEVAKTMDYLCNKIYTLDDEKRLRQRAMLCHVYFLAVHDKWHRARDLLLMSHMQAIVDHSDVDTQILYNRTICQLGLCAFRHGFIREAHQGLSEIQNTQRAKELLAQAVGTRPHEKTAEQEKIDRSRQVPYHMHINVELMECVYLICSMLLEIPHMASCEFEMRRRMLSRSFHYQLKQSEKASLTGPPENTREHVVAASKAMLNGDWKKCKDYIVNEKMNQKVWNLFHNADQVKDMVVRRIQEESLRTYLLTYSTVYSTVSLKKLASLFDLSKKDVHSIISKMIIQEELSATLDEPTDCLIMHRVEPSRLQMLALNLSDKLQTLAENNEQILEPRTGRGGYQGPGSWFPGRNERQGDKQKGSGGFQGERRGGPGGPDGKRGNWGSQGGQQRRHPQKPRAF</sequence>
<protein>
    <recommendedName>
        <fullName evidence="1">Eukaryotic translation initiation factor 3 subunit C</fullName>
        <shortName evidence="1">eIF3c</shortName>
    </recommendedName>
    <alternativeName>
        <fullName evidence="1">Eukaryotic translation initiation factor 3 subunit 8</fullName>
    </alternativeName>
</protein>
<feature type="chain" id="PRO_0000365380" description="Eukaryotic translation initiation factor 3 subunit C">
    <location>
        <begin position="1"/>
        <end position="894"/>
    </location>
</feature>
<feature type="domain" description="PCI" evidence="2">
    <location>
        <begin position="625"/>
        <end position="801"/>
    </location>
</feature>
<feature type="region of interest" description="Disordered" evidence="3">
    <location>
        <begin position="1"/>
        <end position="28"/>
    </location>
</feature>
<feature type="region of interest" description="Disordered" evidence="3">
    <location>
        <begin position="162"/>
        <end position="235"/>
    </location>
</feature>
<feature type="region of interest" description="Disordered" evidence="3">
    <location>
        <begin position="824"/>
        <end position="894"/>
    </location>
</feature>
<feature type="compositionally biased region" description="Acidic residues" evidence="3">
    <location>
        <begin position="12"/>
        <end position="22"/>
    </location>
</feature>
<feature type="compositionally biased region" description="Acidic residues" evidence="3">
    <location>
        <begin position="169"/>
        <end position="189"/>
    </location>
</feature>
<feature type="compositionally biased region" description="Acidic residues" evidence="3">
    <location>
        <begin position="203"/>
        <end position="214"/>
    </location>
</feature>
<feature type="compositionally biased region" description="Polar residues" evidence="3">
    <location>
        <begin position="215"/>
        <end position="224"/>
    </location>
</feature>
<feature type="compositionally biased region" description="Basic and acidic residues" evidence="3">
    <location>
        <begin position="845"/>
        <end position="854"/>
    </location>
</feature>
<feature type="compositionally biased region" description="Gly residues" evidence="3">
    <location>
        <begin position="855"/>
        <end position="870"/>
    </location>
</feature>
<feature type="compositionally biased region" description="Basic residues" evidence="3">
    <location>
        <begin position="884"/>
        <end position="894"/>
    </location>
</feature>
<reference key="1">
    <citation type="journal article" date="2003" name="PLoS Biol.">
        <title>The genome sequence of Caenorhabditis briggsae: a platform for comparative genomics.</title>
        <authorList>
            <person name="Stein L.D."/>
            <person name="Bao Z."/>
            <person name="Blasiar D."/>
            <person name="Blumenthal T."/>
            <person name="Brent M.R."/>
            <person name="Chen N."/>
            <person name="Chinwalla A."/>
            <person name="Clarke L."/>
            <person name="Clee C."/>
            <person name="Coghlan A."/>
            <person name="Coulson A."/>
            <person name="D'Eustachio P."/>
            <person name="Fitch D.H.A."/>
            <person name="Fulton L.A."/>
            <person name="Fulton R.E."/>
            <person name="Griffiths-Jones S."/>
            <person name="Harris T.W."/>
            <person name="Hillier L.W."/>
            <person name="Kamath R."/>
            <person name="Kuwabara P.E."/>
            <person name="Mardis E.R."/>
            <person name="Marra M.A."/>
            <person name="Miner T.L."/>
            <person name="Minx P."/>
            <person name="Mullikin J.C."/>
            <person name="Plumb R.W."/>
            <person name="Rogers J."/>
            <person name="Schein J.E."/>
            <person name="Sohrmann M."/>
            <person name="Spieth J."/>
            <person name="Stajich J.E."/>
            <person name="Wei C."/>
            <person name="Willey D."/>
            <person name="Wilson R.K."/>
            <person name="Durbin R.M."/>
            <person name="Waterston R.H."/>
        </authorList>
    </citation>
    <scope>NUCLEOTIDE SEQUENCE [LARGE SCALE GENOMIC DNA]</scope>
    <source>
        <strain>AF16</strain>
    </source>
</reference>
<dbReference type="EMBL" id="HE600906">
    <property type="protein sequence ID" value="CAP24647.1"/>
    <property type="molecule type" value="Genomic_DNA"/>
</dbReference>
<dbReference type="SMR" id="A8WWU0"/>
<dbReference type="FunCoup" id="A8WWU0">
    <property type="interactions" value="2418"/>
</dbReference>
<dbReference type="STRING" id="6238.A8WWU0"/>
<dbReference type="EnsemblMetazoa" id="CBG03821.1">
    <property type="protein sequence ID" value="CBG03821.1"/>
    <property type="gene ID" value="WBGene00026601"/>
</dbReference>
<dbReference type="KEGG" id="cbr:CBG_03821"/>
<dbReference type="CTD" id="8581254"/>
<dbReference type="WormBase" id="CBG03821">
    <property type="protein sequence ID" value="CBP01111"/>
    <property type="gene ID" value="WBGene00026601"/>
    <property type="gene designation" value="Cbr-eif-3.C"/>
</dbReference>
<dbReference type="eggNOG" id="KOG1076">
    <property type="taxonomic scope" value="Eukaryota"/>
</dbReference>
<dbReference type="HOGENOM" id="CLU_004304_0_0_1"/>
<dbReference type="InParanoid" id="A8WWU0"/>
<dbReference type="OMA" id="FRCGLIK"/>
<dbReference type="Proteomes" id="UP000008549">
    <property type="component" value="Unassembled WGS sequence"/>
</dbReference>
<dbReference type="GO" id="GO:0016282">
    <property type="term" value="C:eukaryotic 43S preinitiation complex"/>
    <property type="evidence" value="ECO:0007669"/>
    <property type="project" value="UniProtKB-UniRule"/>
</dbReference>
<dbReference type="GO" id="GO:0033290">
    <property type="term" value="C:eukaryotic 48S preinitiation complex"/>
    <property type="evidence" value="ECO:0007669"/>
    <property type="project" value="UniProtKB-UniRule"/>
</dbReference>
<dbReference type="GO" id="GO:0005852">
    <property type="term" value="C:eukaryotic translation initiation factor 3 complex"/>
    <property type="evidence" value="ECO:0000318"/>
    <property type="project" value="GO_Central"/>
</dbReference>
<dbReference type="GO" id="GO:0003723">
    <property type="term" value="F:RNA binding"/>
    <property type="evidence" value="ECO:0007669"/>
    <property type="project" value="InterPro"/>
</dbReference>
<dbReference type="GO" id="GO:0003743">
    <property type="term" value="F:translation initiation factor activity"/>
    <property type="evidence" value="ECO:0007669"/>
    <property type="project" value="UniProtKB-UniRule"/>
</dbReference>
<dbReference type="GO" id="GO:0031369">
    <property type="term" value="F:translation initiation factor binding"/>
    <property type="evidence" value="ECO:0000318"/>
    <property type="project" value="GO_Central"/>
</dbReference>
<dbReference type="GO" id="GO:0001732">
    <property type="term" value="P:formation of cytoplasmic translation initiation complex"/>
    <property type="evidence" value="ECO:0007669"/>
    <property type="project" value="UniProtKB-UniRule"/>
</dbReference>
<dbReference type="GO" id="GO:0006413">
    <property type="term" value="P:translational initiation"/>
    <property type="evidence" value="ECO:0000318"/>
    <property type="project" value="GO_Central"/>
</dbReference>
<dbReference type="Gene3D" id="1.25.40.570">
    <property type="match status" value="1"/>
</dbReference>
<dbReference type="HAMAP" id="MF_03002">
    <property type="entry name" value="eIF3c"/>
    <property type="match status" value="1"/>
</dbReference>
<dbReference type="InterPro" id="IPR027516">
    <property type="entry name" value="EIF3C"/>
</dbReference>
<dbReference type="InterPro" id="IPR008905">
    <property type="entry name" value="EIF3C_N_dom"/>
</dbReference>
<dbReference type="InterPro" id="IPR000717">
    <property type="entry name" value="PCI_dom"/>
</dbReference>
<dbReference type="InterPro" id="IPR036390">
    <property type="entry name" value="WH_DNA-bd_sf"/>
</dbReference>
<dbReference type="PANTHER" id="PTHR13937">
    <property type="entry name" value="EUKARYOTIC TRANSLATION INITATION FACTOR 3, SUBUNIT 8 EIF3S8 -RELATED"/>
    <property type="match status" value="1"/>
</dbReference>
<dbReference type="PANTHER" id="PTHR13937:SF0">
    <property type="entry name" value="EUKARYOTIC TRANSLATION INITIATION FACTOR 3 SUBUNIT C-RELATED"/>
    <property type="match status" value="1"/>
</dbReference>
<dbReference type="Pfam" id="PF05470">
    <property type="entry name" value="eIF-3c_N"/>
    <property type="match status" value="1"/>
</dbReference>
<dbReference type="Pfam" id="PF01399">
    <property type="entry name" value="PCI"/>
    <property type="match status" value="1"/>
</dbReference>
<dbReference type="SMART" id="SM00088">
    <property type="entry name" value="PINT"/>
    <property type="match status" value="1"/>
</dbReference>
<dbReference type="SUPFAM" id="SSF46785">
    <property type="entry name" value="Winged helix' DNA-binding domain"/>
    <property type="match status" value="1"/>
</dbReference>
<dbReference type="PROSITE" id="PS50250">
    <property type="entry name" value="PCI"/>
    <property type="match status" value="1"/>
</dbReference>
<accession>A8WWU0</accession>